<sequence length="261" mass="28098">MSARKFVVGGNWKCNGTLASIETLTKGVAASVDAELAKKVEVIVGVPFIYIPKVQQILAGEANGANILVSAENAWTKSGAYTGEVHVGMLVDCQVPYVILGHSERRQIFHESNEQVAEKVKVAIDAGLKVIACIGETEAQRIANQTEEVVAAQLKAINNAISKEAWKNIILAYEPVWAIGTGKTATPDQAQEVHQYIRKWMTENISKEVAEATRIQYGGSVNPANCNELAKKADIDGFLVGGASLDAAKFKTIINSVSEKF</sequence>
<feature type="chain" id="PRO_0000090133" description="Triosephosphate isomerase">
    <location>
        <begin position="1"/>
        <end position="261"/>
    </location>
</feature>
<feature type="active site" description="Electrophile" evidence="2">
    <location>
        <position position="102"/>
    </location>
</feature>
<feature type="active site" description="Proton acceptor" evidence="2">
    <location>
        <position position="174"/>
    </location>
</feature>
<feature type="binding site" evidence="1">
    <location>
        <position position="11"/>
    </location>
    <ligand>
        <name>D-glyceraldehyde 3-phosphate</name>
        <dbReference type="ChEBI" id="CHEBI:59776"/>
    </ligand>
</feature>
<feature type="binding site" evidence="1">
    <location>
        <position position="13"/>
    </location>
    <ligand>
        <name>D-glyceraldehyde 3-phosphate</name>
        <dbReference type="ChEBI" id="CHEBI:59776"/>
    </ligand>
</feature>
<feature type="binding site" evidence="1">
    <location>
        <position position="180"/>
    </location>
    <ligand>
        <name>D-glyceraldehyde 3-phosphate</name>
        <dbReference type="ChEBI" id="CHEBI:59776"/>
    </ligand>
</feature>
<feature type="binding site" evidence="1">
    <location>
        <position position="239"/>
    </location>
    <ligand>
        <name>D-glyceraldehyde 3-phosphate</name>
        <dbReference type="ChEBI" id="CHEBI:59776"/>
    </ligand>
</feature>
<feature type="binding site" evidence="1">
    <location>
        <position position="241"/>
    </location>
    <ligand>
        <name>D-glyceraldehyde 3-phosphate</name>
        <dbReference type="ChEBI" id="CHEBI:59776"/>
    </ligand>
</feature>
<feature type="sequence conflict" description="In Ref. 1; CAA73817." evidence="7" ref="1">
    <original>SAR</original>
    <variation>GAG</variation>
    <location>
        <begin position="2"/>
        <end position="4"/>
    </location>
</feature>
<feature type="strand" evidence="13">
    <location>
        <begin position="6"/>
        <end position="11"/>
    </location>
</feature>
<feature type="helix" evidence="13">
    <location>
        <begin position="18"/>
        <end position="31"/>
    </location>
</feature>
<feature type="helix" evidence="13">
    <location>
        <begin position="34"/>
        <end position="37"/>
    </location>
</feature>
<feature type="strand" evidence="13">
    <location>
        <begin position="40"/>
        <end position="46"/>
    </location>
</feature>
<feature type="helix" evidence="13">
    <location>
        <begin position="48"/>
        <end position="50"/>
    </location>
</feature>
<feature type="helix" evidence="13">
    <location>
        <begin position="51"/>
        <end position="59"/>
    </location>
</feature>
<feature type="helix" evidence="13">
    <location>
        <begin position="64"/>
        <end position="66"/>
    </location>
</feature>
<feature type="strand" evidence="13">
    <location>
        <begin position="67"/>
        <end position="72"/>
    </location>
</feature>
<feature type="strand" evidence="13">
    <location>
        <begin position="75"/>
        <end position="80"/>
    </location>
</feature>
<feature type="helix" evidence="13">
    <location>
        <begin position="87"/>
        <end position="92"/>
    </location>
</feature>
<feature type="strand" evidence="13">
    <location>
        <begin position="97"/>
        <end position="101"/>
    </location>
</feature>
<feature type="helix" evidence="13">
    <location>
        <begin position="103"/>
        <end position="108"/>
    </location>
</feature>
<feature type="helix" evidence="13">
    <location>
        <begin position="113"/>
        <end position="126"/>
    </location>
</feature>
<feature type="strand" evidence="13">
    <location>
        <begin position="129"/>
        <end position="134"/>
    </location>
</feature>
<feature type="helix" evidence="13">
    <location>
        <begin position="138"/>
        <end position="142"/>
    </location>
</feature>
<feature type="helix" evidence="13">
    <location>
        <begin position="146"/>
        <end position="160"/>
    </location>
</feature>
<feature type="helix" evidence="13">
    <location>
        <begin position="164"/>
        <end position="168"/>
    </location>
</feature>
<feature type="strand" evidence="13">
    <location>
        <begin position="169"/>
        <end position="173"/>
    </location>
</feature>
<feature type="helix" evidence="13">
    <location>
        <begin position="176"/>
        <end position="178"/>
    </location>
</feature>
<feature type="strand" evidence="13">
    <location>
        <begin position="179"/>
        <end position="182"/>
    </location>
</feature>
<feature type="helix" evidence="13">
    <location>
        <begin position="187"/>
        <end position="204"/>
    </location>
</feature>
<feature type="helix" evidence="13">
    <location>
        <begin position="207"/>
        <end position="212"/>
    </location>
</feature>
<feature type="strand" evidence="13">
    <location>
        <begin position="215"/>
        <end position="217"/>
    </location>
</feature>
<feature type="turn" evidence="13">
    <location>
        <begin position="223"/>
        <end position="225"/>
    </location>
</feature>
<feature type="helix" evidence="13">
    <location>
        <begin position="226"/>
        <end position="230"/>
    </location>
</feature>
<feature type="strand" evidence="13">
    <location>
        <begin position="237"/>
        <end position="241"/>
    </location>
</feature>
<feature type="helix" evidence="13">
    <location>
        <begin position="242"/>
        <end position="245"/>
    </location>
</feature>
<feature type="helix" evidence="13">
    <location>
        <begin position="247"/>
        <end position="254"/>
    </location>
</feature>
<feature type="helix" evidence="13">
    <location>
        <begin position="255"/>
        <end position="259"/>
    </location>
</feature>
<organism evidence="11">
    <name type="scientific">Entamoeba histolytica (strain ATCC 30459 / HM-1:IMSS / ABRM)</name>
    <dbReference type="NCBI Taxonomy" id="294381"/>
    <lineage>
        <taxon>Eukaryota</taxon>
        <taxon>Amoebozoa</taxon>
        <taxon>Evosea</taxon>
        <taxon>Archamoebae</taxon>
        <taxon>Mastigamoebida</taxon>
        <taxon>Entamoebidae</taxon>
        <taxon>Entamoeba</taxon>
    </lineage>
</organism>
<dbReference type="EC" id="5.3.1.1" evidence="3 4"/>
<dbReference type="EMBL" id="Y13387">
    <property type="protein sequence ID" value="CAA73817.1"/>
    <property type="molecule type" value="mRNA"/>
</dbReference>
<dbReference type="EMBL" id="DS571313">
    <property type="protein sequence ID" value="EAL45339.1"/>
    <property type="molecule type" value="Genomic_DNA"/>
</dbReference>
<dbReference type="RefSeq" id="XP_650725.1">
    <property type="nucleotide sequence ID" value="XM_645633.2"/>
</dbReference>
<dbReference type="PDB" id="1M6J">
    <property type="method" value="X-ray"/>
    <property type="resolution" value="1.50 A"/>
    <property type="chains" value="A/B=1-261"/>
</dbReference>
<dbReference type="PDBsum" id="1M6J"/>
<dbReference type="SMR" id="O02611"/>
<dbReference type="STRING" id="5759.C4M6Z7"/>
<dbReference type="EnsemblProtists" id="GAT97279">
    <property type="protein sequence ID" value="GAT97279"/>
    <property type="gene ID" value="CL6EHI_056480"/>
</dbReference>
<dbReference type="EnsemblProtists" id="rna_EHI_056480-1">
    <property type="protein sequence ID" value="rna_EHI_056480-1"/>
    <property type="gene ID" value="EHI_056480"/>
</dbReference>
<dbReference type="GeneID" id="3405023"/>
<dbReference type="KEGG" id="ehi:EHI_056480"/>
<dbReference type="VEuPathDB" id="AmoebaDB:EHI5A_015860"/>
<dbReference type="VEuPathDB" id="AmoebaDB:EHI7A_083420"/>
<dbReference type="VEuPathDB" id="AmoebaDB:EHI8A_145350"/>
<dbReference type="VEuPathDB" id="AmoebaDB:EHI_056480"/>
<dbReference type="VEuPathDB" id="AmoebaDB:KM1_061580"/>
<dbReference type="eggNOG" id="KOG1643">
    <property type="taxonomic scope" value="Eukaryota"/>
</dbReference>
<dbReference type="HOGENOM" id="CLU_024251_2_0_1"/>
<dbReference type="OMA" id="IEKNGTM"/>
<dbReference type="OrthoDB" id="6715177at2759"/>
<dbReference type="BRENDA" id="5.3.1.1">
    <property type="organism ID" value="2080"/>
</dbReference>
<dbReference type="SABIO-RK" id="O02611"/>
<dbReference type="UniPathway" id="UPA00109">
    <property type="reaction ID" value="UER00189"/>
</dbReference>
<dbReference type="UniPathway" id="UPA00138"/>
<dbReference type="EvolutionaryTrace" id="O02611"/>
<dbReference type="Proteomes" id="UP000001926">
    <property type="component" value="Partially assembled WGS sequence"/>
</dbReference>
<dbReference type="GO" id="GO:0005829">
    <property type="term" value="C:cytosol"/>
    <property type="evidence" value="ECO:0000318"/>
    <property type="project" value="GO_Central"/>
</dbReference>
<dbReference type="GO" id="GO:0004807">
    <property type="term" value="F:triose-phosphate isomerase activity"/>
    <property type="evidence" value="ECO:0000318"/>
    <property type="project" value="GO_Central"/>
</dbReference>
<dbReference type="GO" id="GO:0006094">
    <property type="term" value="P:gluconeogenesis"/>
    <property type="evidence" value="ECO:0000318"/>
    <property type="project" value="GO_Central"/>
</dbReference>
<dbReference type="GO" id="GO:0046166">
    <property type="term" value="P:glyceraldehyde-3-phosphate biosynthetic process"/>
    <property type="evidence" value="ECO:0000318"/>
    <property type="project" value="GO_Central"/>
</dbReference>
<dbReference type="GO" id="GO:0019563">
    <property type="term" value="P:glycerol catabolic process"/>
    <property type="evidence" value="ECO:0000318"/>
    <property type="project" value="GO_Central"/>
</dbReference>
<dbReference type="GO" id="GO:0006096">
    <property type="term" value="P:glycolytic process"/>
    <property type="evidence" value="ECO:0000318"/>
    <property type="project" value="GO_Central"/>
</dbReference>
<dbReference type="CDD" id="cd00311">
    <property type="entry name" value="TIM"/>
    <property type="match status" value="1"/>
</dbReference>
<dbReference type="FunFam" id="3.20.20.70:FF:000020">
    <property type="entry name" value="Triosephosphate isomerase"/>
    <property type="match status" value="1"/>
</dbReference>
<dbReference type="Gene3D" id="3.20.20.70">
    <property type="entry name" value="Aldolase class I"/>
    <property type="match status" value="1"/>
</dbReference>
<dbReference type="HAMAP" id="MF_00147_B">
    <property type="entry name" value="TIM_B"/>
    <property type="match status" value="1"/>
</dbReference>
<dbReference type="InterPro" id="IPR013785">
    <property type="entry name" value="Aldolase_TIM"/>
</dbReference>
<dbReference type="InterPro" id="IPR035990">
    <property type="entry name" value="TIM_sf"/>
</dbReference>
<dbReference type="InterPro" id="IPR022896">
    <property type="entry name" value="TrioseP_Isoase_bac/euk"/>
</dbReference>
<dbReference type="InterPro" id="IPR000652">
    <property type="entry name" value="Triosephosphate_isomerase"/>
</dbReference>
<dbReference type="InterPro" id="IPR020861">
    <property type="entry name" value="Triosephosphate_isomerase_AS"/>
</dbReference>
<dbReference type="NCBIfam" id="TIGR00419">
    <property type="entry name" value="tim"/>
    <property type="match status" value="1"/>
</dbReference>
<dbReference type="PANTHER" id="PTHR21139">
    <property type="entry name" value="TRIOSEPHOSPHATE ISOMERASE"/>
    <property type="match status" value="1"/>
</dbReference>
<dbReference type="PANTHER" id="PTHR21139:SF2">
    <property type="entry name" value="TRIOSEPHOSPHATE ISOMERASE"/>
    <property type="match status" value="1"/>
</dbReference>
<dbReference type="Pfam" id="PF00121">
    <property type="entry name" value="TIM"/>
    <property type="match status" value="1"/>
</dbReference>
<dbReference type="SUPFAM" id="SSF51351">
    <property type="entry name" value="Triosephosphate isomerase (TIM)"/>
    <property type="match status" value="1"/>
</dbReference>
<dbReference type="PROSITE" id="PS00171">
    <property type="entry name" value="TIM_1"/>
    <property type="match status" value="1"/>
</dbReference>
<dbReference type="PROSITE" id="PS51440">
    <property type="entry name" value="TIM_2"/>
    <property type="match status" value="1"/>
</dbReference>
<accession>O02611</accession>
<accession>A0A175JU33</accession>
<accession>C4M6Z7</accession>
<protein>
    <recommendedName>
        <fullName evidence="6">Triosephosphate isomerase</fullName>
        <shortName evidence="5">EhTIM</shortName>
        <ecNumber evidence="3 4">5.3.1.1</ecNumber>
    </recommendedName>
    <alternativeName>
        <fullName evidence="7">Triose-phosphate isomerase</fullName>
    </alternativeName>
</protein>
<name>TPIS_ENTH1</name>
<reference evidence="10" key="1">
    <citation type="journal article" date="1997" name="Eur. J. Biochem.">
        <title>Sequencing, expression and properties of triosephosphate isomerase from Entamoeba histolytica.</title>
        <authorList>
            <person name="Landa A."/>
            <person name="Rojo-Dominguez A."/>
            <person name="Jimenez L."/>
            <person name="Fernandez-Velasco D.A."/>
        </authorList>
    </citation>
    <scope>NUCLEOTIDE SEQUENCE [MRNA]</scope>
    <scope>FUNCTION</scope>
    <scope>CATALYTIC ACTIVITY</scope>
    <scope>BIOPHYSICOCHEMICAL PROPERTIES</scope>
    <scope>PATHWAY</scope>
    <source>
        <strain evidence="10">ATCC 30459 / HM-1:IMSS / ABRM</strain>
    </source>
</reference>
<reference evidence="11" key="2">
    <citation type="journal article" date="2005" name="Nature">
        <title>The genome of the protist parasite Entamoeba histolytica.</title>
        <authorList>
            <person name="Loftus B.J."/>
            <person name="Anderson I."/>
            <person name="Davies R."/>
            <person name="Alsmark U.C."/>
            <person name="Samuelson J."/>
            <person name="Amedeo P."/>
            <person name="Roncaglia P."/>
            <person name="Berriman M."/>
            <person name="Hirt R.P."/>
            <person name="Mann B.J."/>
            <person name="Nozaki T."/>
            <person name="Suh B."/>
            <person name="Pop M."/>
            <person name="Duchene M."/>
            <person name="Ackers J."/>
            <person name="Tannich E."/>
            <person name="Leippe M."/>
            <person name="Hofer M."/>
            <person name="Bruchhaus I."/>
            <person name="Willhoeft U."/>
            <person name="Bhattacharya A."/>
            <person name="Chillingworth T."/>
            <person name="Churcher C.M."/>
            <person name="Hance Z."/>
            <person name="Harris B."/>
            <person name="Harris D."/>
            <person name="Jagels K."/>
            <person name="Moule S."/>
            <person name="Mungall K.L."/>
            <person name="Ormond D."/>
            <person name="Squares R."/>
            <person name="Whitehead S."/>
            <person name="Quail M.A."/>
            <person name="Rabbinowitsch E."/>
            <person name="Norbertczak H."/>
            <person name="Price C."/>
            <person name="Wang Z."/>
            <person name="Guillen N."/>
            <person name="Gilchrist C."/>
            <person name="Stroup S.E."/>
            <person name="Bhattacharya S."/>
            <person name="Lohia A."/>
            <person name="Foster P.G."/>
            <person name="Sicheritz-Ponten T."/>
            <person name="Weber C."/>
            <person name="Singh U."/>
            <person name="Mukherjee C."/>
            <person name="El-Sayed N.M.A."/>
            <person name="Petri W.A."/>
            <person name="Clark C.G."/>
            <person name="Embley T.M."/>
            <person name="Barrell B.G."/>
            <person name="Fraser C.M."/>
            <person name="Hall N."/>
        </authorList>
    </citation>
    <scope>NUCLEOTIDE SEQUENCE [LARGE SCALE GENOMIC DNA]</scope>
    <source>
        <strain evidence="11">ATCC 30459 / HM-1:IMSS / ABRM</strain>
    </source>
</reference>
<reference evidence="12" key="3">
    <citation type="journal article" date="2002" name="J. Mol. Biol.">
        <title>Structure and inactivation of triosephosphate isomerase from Entamoeba histolytica.</title>
        <authorList>
            <person name="Rodriguez-Romero A."/>
            <person name="Hernandez-Santoyo A."/>
            <person name="del Pozo Yauner L."/>
            <person name="Kornhauser A."/>
            <person name="Fernandez-Velasco D.A."/>
        </authorList>
    </citation>
    <scope>X-RAY CRYSTALLOGRAPHY (1.5 ANGSTROMS)</scope>
    <scope>FUNCTION</scope>
    <scope>CATALYTIC ACTIVITY</scope>
    <scope>PATHWAY</scope>
    <scope>SUBUNIT</scope>
</reference>
<proteinExistence type="evidence at protein level"/>
<gene>
    <name evidence="6" type="primary">TPI</name>
    <name evidence="11" type="ORF">EHI_056480</name>
</gene>
<keyword id="KW-0002">3D-structure</keyword>
<keyword id="KW-0312">Gluconeogenesis</keyword>
<keyword id="KW-0324">Glycolysis</keyword>
<keyword id="KW-0413">Isomerase</keyword>
<keyword id="KW-1185">Reference proteome</keyword>
<evidence type="ECO:0000250" key="1">
    <source>
        <dbReference type="UniProtKB" id="Q07412"/>
    </source>
</evidence>
<evidence type="ECO:0000255" key="2">
    <source>
        <dbReference type="PROSITE-ProRule" id="PRU10127"/>
    </source>
</evidence>
<evidence type="ECO:0000269" key="3">
    <source>
    </source>
</evidence>
<evidence type="ECO:0000269" key="4">
    <source>
    </source>
</evidence>
<evidence type="ECO:0000303" key="5">
    <source>
    </source>
</evidence>
<evidence type="ECO:0000303" key="6">
    <source>
    </source>
</evidence>
<evidence type="ECO:0000305" key="7"/>
<evidence type="ECO:0000305" key="8">
    <source>
    </source>
</evidence>
<evidence type="ECO:0000305" key="9">
    <source>
    </source>
</evidence>
<evidence type="ECO:0000312" key="10">
    <source>
        <dbReference type="EMBL" id="CAA73817.1"/>
    </source>
</evidence>
<evidence type="ECO:0000312" key="11">
    <source>
        <dbReference type="EMBL" id="EAL45339.1"/>
    </source>
</evidence>
<evidence type="ECO:0000312" key="12">
    <source>
        <dbReference type="PDB" id="1M6J"/>
    </source>
</evidence>
<evidence type="ECO:0007829" key="13">
    <source>
        <dbReference type="PDB" id="1M6J"/>
    </source>
</evidence>
<comment type="function">
    <text evidence="3 4">Catalyzes the interconversion of glyceraldehyde 3-phosphate and dihydroxyacetone phosphate in the glycolytic and gluconeogenic pathways.</text>
</comment>
<comment type="catalytic activity">
    <reaction evidence="3 4">
        <text>D-glyceraldehyde 3-phosphate = dihydroxyacetone phosphate</text>
        <dbReference type="Rhea" id="RHEA:18585"/>
        <dbReference type="ChEBI" id="CHEBI:57642"/>
        <dbReference type="ChEBI" id="CHEBI:59776"/>
        <dbReference type="EC" id="5.3.1.1"/>
    </reaction>
    <physiologicalReaction direction="left-to-right" evidence="8 9">
        <dbReference type="Rhea" id="RHEA:18586"/>
    </physiologicalReaction>
</comment>
<comment type="biophysicochemical properties">
    <kinetics>
        <KM evidence="4">0.61 mM for D-glyceraldehyde-3-phosphate (at pH 7.4)</KM>
        <text evidence="4">kcat is 4016 sec(-1) with D-glyceraldehyde-3-phosphate as substrate (at pH 7.4).</text>
    </kinetics>
</comment>
<comment type="pathway">
    <text evidence="8 9">Carbohydrate biosynthesis; gluconeogenesis.</text>
</comment>
<comment type="pathway">
    <text evidence="8 9">Carbohydrate degradation; glycolysis; D-glyceraldehyde 3-phosphate from glycerone phosphate: step 1/1.</text>
</comment>
<comment type="subunit">
    <text evidence="8">Homodimer.</text>
</comment>
<comment type="similarity">
    <text evidence="7">Belongs to the triosephosphate isomerase family.</text>
</comment>